<protein>
    <recommendedName>
        <fullName>Solute carrier family 25 member 33</fullName>
    </recommendedName>
</protein>
<organism>
    <name type="scientific">Bos taurus</name>
    <name type="common">Bovine</name>
    <dbReference type="NCBI Taxonomy" id="9913"/>
    <lineage>
        <taxon>Eukaryota</taxon>
        <taxon>Metazoa</taxon>
        <taxon>Chordata</taxon>
        <taxon>Craniata</taxon>
        <taxon>Vertebrata</taxon>
        <taxon>Euteleostomi</taxon>
        <taxon>Mammalia</taxon>
        <taxon>Eutheria</taxon>
        <taxon>Laurasiatheria</taxon>
        <taxon>Artiodactyla</taxon>
        <taxon>Ruminantia</taxon>
        <taxon>Pecora</taxon>
        <taxon>Bovidae</taxon>
        <taxon>Bovinae</taxon>
        <taxon>Bos</taxon>
    </lineage>
</organism>
<proteinExistence type="evidence at transcript level"/>
<name>S2533_BOVIN</name>
<accession>Q1LZB3</accession>
<reference key="1">
    <citation type="submission" date="2006-05" db="EMBL/GenBank/DDBJ databases">
        <authorList>
            <consortium name="NIH - Mammalian Gene Collection (MGC) project"/>
        </authorList>
    </citation>
    <scope>NUCLEOTIDE SEQUENCE [LARGE SCALE MRNA]</scope>
    <source>
        <strain>Hereford</strain>
        <tissue>Hippocampus</tissue>
    </source>
</reference>
<feature type="chain" id="PRO_0000291784" description="Solute carrier family 25 member 33">
    <location>
        <begin position="1"/>
        <end position="321"/>
    </location>
</feature>
<feature type="transmembrane region" description="Helical; Name=1" evidence="2">
    <location>
        <begin position="12"/>
        <end position="32"/>
    </location>
</feature>
<feature type="transmembrane region" description="Helical; Name=2" evidence="2">
    <location>
        <begin position="49"/>
        <end position="65"/>
    </location>
</feature>
<feature type="transmembrane region" description="Helical; Name=3" evidence="2">
    <location>
        <begin position="121"/>
        <end position="141"/>
    </location>
</feature>
<feature type="transmembrane region" description="Helical; Name=4" evidence="2">
    <location>
        <begin position="190"/>
        <end position="210"/>
    </location>
</feature>
<feature type="transmembrane region" description="Helical; Name=5" evidence="2">
    <location>
        <begin position="233"/>
        <end position="253"/>
    </location>
</feature>
<feature type="transmembrane region" description="Helical; Name=6" evidence="2">
    <location>
        <begin position="298"/>
        <end position="318"/>
    </location>
</feature>
<feature type="repeat" description="Solcar 1">
    <location>
        <begin position="9"/>
        <end position="118"/>
    </location>
</feature>
<feature type="repeat" description="Solcar 2">
    <location>
        <begin position="126"/>
        <end position="213"/>
    </location>
</feature>
<feature type="repeat" description="Solcar 3">
    <location>
        <begin position="231"/>
        <end position="315"/>
    </location>
</feature>
<comment type="function">
    <text evidence="1">Mitochondrial transporter that imports/exports pyrimidine nucleotides into and from mitochondria. Selectively transports uridine, thymidine, guanosine, cytosine and inosine (deoxy)nucleoside di- and triphosphates by an antiport mechanism (By similarity). May import (deoxy)nucleoside triphosphates in exchange for intramitochondrial (deoxy)nucleoside diphosphates, thus providing precursors necessary for de novo synthesis of mitochondrial DNA and RNA while exporting products of their catabolism (By similarity). Participates in mitochondrial genome maintenance, regulation of mitochondrial membrane potential and mitochondrial respiration (By similarity). Upon INS or IGF1 stimulation regulates cell growth and proliferation by controlling mitochondrial DNA replication and transcription, the ratio of mitochondria-to nuclear-encoded components of the electron transport chain resulting in control of mitochondrial ROS production (By similarity). Participates in dendritic cell endocytosis and may associate with mitochondrial oxidative phosphorylation (By similarity).</text>
</comment>
<comment type="catalytic activity">
    <reaction evidence="1">
        <text>UTP(in) + UDP(out) = UTP(out) + UDP(in)</text>
        <dbReference type="Rhea" id="RHEA:73515"/>
        <dbReference type="ChEBI" id="CHEBI:46398"/>
        <dbReference type="ChEBI" id="CHEBI:58223"/>
    </reaction>
</comment>
<comment type="catalytic activity">
    <reaction evidence="1">
        <text>dUTP(out) + UTP(in) = dUTP(in) + UTP(out)</text>
        <dbReference type="Rhea" id="RHEA:73519"/>
        <dbReference type="ChEBI" id="CHEBI:46398"/>
        <dbReference type="ChEBI" id="CHEBI:61555"/>
    </reaction>
</comment>
<comment type="catalytic activity">
    <reaction evidence="1">
        <text>5-methyl-UTP(out) + UTP(in) = 5-methyl-UTP(in) + UTP(out)</text>
        <dbReference type="Rhea" id="RHEA:73523"/>
        <dbReference type="ChEBI" id="CHEBI:46398"/>
        <dbReference type="ChEBI" id="CHEBI:63527"/>
    </reaction>
</comment>
<comment type="catalytic activity">
    <reaction evidence="1">
        <text>5-methyl-UDP(out) + UTP(in) = 5-methyl-UDP(in) + UTP(out)</text>
        <dbReference type="Rhea" id="RHEA:73527"/>
        <dbReference type="ChEBI" id="CHEBI:46398"/>
        <dbReference type="ChEBI" id="CHEBI:61417"/>
    </reaction>
</comment>
<comment type="catalytic activity">
    <reaction evidence="1">
        <text>UTP(in) + CTP(out) = UTP(out) + CTP(in)</text>
        <dbReference type="Rhea" id="RHEA:73531"/>
        <dbReference type="ChEBI" id="CHEBI:37563"/>
        <dbReference type="ChEBI" id="CHEBI:46398"/>
    </reaction>
</comment>
<comment type="catalytic activity">
    <reaction evidence="1">
        <text>CDP(out) + UTP(in) = CDP(in) + UTP(out)</text>
        <dbReference type="Rhea" id="RHEA:73535"/>
        <dbReference type="ChEBI" id="CHEBI:46398"/>
        <dbReference type="ChEBI" id="CHEBI:58069"/>
    </reaction>
</comment>
<comment type="catalytic activity">
    <reaction evidence="1">
        <text>dCTP(out) + UTP(in) = dCTP(in) + UTP(out)</text>
        <dbReference type="Rhea" id="RHEA:73539"/>
        <dbReference type="ChEBI" id="CHEBI:46398"/>
        <dbReference type="ChEBI" id="CHEBI:61481"/>
    </reaction>
</comment>
<comment type="catalytic activity">
    <reaction evidence="1">
        <text>dCDP(out) + UTP(in) = dCDP(in) + UTP(out)</text>
        <dbReference type="Rhea" id="RHEA:73543"/>
        <dbReference type="ChEBI" id="CHEBI:46398"/>
        <dbReference type="ChEBI" id="CHEBI:58593"/>
    </reaction>
</comment>
<comment type="catalytic activity">
    <reaction evidence="1">
        <text>UTP(in) + GTP(out) = UTP(out) + GTP(in)</text>
        <dbReference type="Rhea" id="RHEA:73547"/>
        <dbReference type="ChEBI" id="CHEBI:37565"/>
        <dbReference type="ChEBI" id="CHEBI:46398"/>
    </reaction>
</comment>
<comment type="catalytic activity">
    <reaction evidence="1">
        <text>UTP(in) + GDP(out) = UTP(out) + GDP(in)</text>
        <dbReference type="Rhea" id="RHEA:73551"/>
        <dbReference type="ChEBI" id="CHEBI:46398"/>
        <dbReference type="ChEBI" id="CHEBI:58189"/>
    </reaction>
</comment>
<comment type="catalytic activity">
    <reaction evidence="1">
        <text>dGTP(out) + UTP(in) = dGTP(in) + UTP(out)</text>
        <dbReference type="Rhea" id="RHEA:73559"/>
        <dbReference type="ChEBI" id="CHEBI:46398"/>
        <dbReference type="ChEBI" id="CHEBI:61429"/>
    </reaction>
</comment>
<comment type="catalytic activity">
    <reaction evidence="1">
        <text>dGDP(out) + UTP(in) = dGDP(in) + UTP(out)</text>
        <dbReference type="Rhea" id="RHEA:73563"/>
        <dbReference type="ChEBI" id="CHEBI:46398"/>
        <dbReference type="ChEBI" id="CHEBI:58595"/>
    </reaction>
</comment>
<comment type="catalytic activity">
    <reaction evidence="1">
        <text>ITP(out) + UTP(in) = ITP(in) + UTP(out)</text>
        <dbReference type="Rhea" id="RHEA:73567"/>
        <dbReference type="ChEBI" id="CHEBI:46398"/>
        <dbReference type="ChEBI" id="CHEBI:61402"/>
    </reaction>
</comment>
<comment type="subcellular location">
    <subcellularLocation>
        <location evidence="1">Mitochondrion inner membrane</location>
        <topology evidence="2">Multi-pass membrane protein</topology>
    </subcellularLocation>
</comment>
<comment type="similarity">
    <text evidence="3">Belongs to the mitochondrial carrier (TC 2.A.29) family.</text>
</comment>
<gene>
    <name type="primary">SLC25A33</name>
</gene>
<evidence type="ECO:0000250" key="1">
    <source>
        <dbReference type="UniProtKB" id="Q9BSK2"/>
    </source>
</evidence>
<evidence type="ECO:0000255" key="2"/>
<evidence type="ECO:0000305" key="3"/>
<sequence length="321" mass="35378">MATGTQQKENTLLHLFAGGCGGTVGAIFTCPLEVIKTRLQSSRLALRTVYYPQVHLGTISGAGVVRQTSVTPGLLQVLKSILEKEGPRSLFRGLGPNLVGVAPSRAVYFACYSKAKEQFNGVFVPNSNIVHVFSAGSAAFVTNSLMNPIWMVKTRMQLERKVRGSKQMNTLQCARYVYQTEGIRGFYRGLTASYAGISETIICFAIYESLKKYLKEAPLASSTNGTEKNSTNFFGLMAAAALSKGCASCVAYPHEVIRTRLREEGSKYKSFVQTARLVFREEGYLAFYRGLFAQLIRQIPNTAIVLSTYELIVYLLEDHAQ</sequence>
<dbReference type="EMBL" id="BC116108">
    <property type="protein sequence ID" value="AAI16109.1"/>
    <property type="molecule type" value="mRNA"/>
</dbReference>
<dbReference type="RefSeq" id="XP_010811602.1">
    <property type="nucleotide sequence ID" value="XM_010813300.1"/>
</dbReference>
<dbReference type="RefSeq" id="XP_010821400.1">
    <property type="nucleotide sequence ID" value="XM_010823098.2"/>
</dbReference>
<dbReference type="SMR" id="Q1LZB3"/>
<dbReference type="FunCoup" id="Q1LZB3">
    <property type="interactions" value="1669"/>
</dbReference>
<dbReference type="STRING" id="9913.ENSBTAP00000004127"/>
<dbReference type="PaxDb" id="9913-ENSBTAP00000004127"/>
<dbReference type="Ensembl" id="ENSBTAT00000004127.6">
    <property type="protein sequence ID" value="ENSBTAP00000004127.5"/>
    <property type="gene ID" value="ENSBTAG00000003177.7"/>
</dbReference>
<dbReference type="GeneID" id="533794"/>
<dbReference type="KEGG" id="bta:533794"/>
<dbReference type="CTD" id="84275"/>
<dbReference type="VEuPathDB" id="HostDB:ENSBTAG00000003177"/>
<dbReference type="VGNC" id="VGNC:34759">
    <property type="gene designation" value="SLC25A33"/>
</dbReference>
<dbReference type="eggNOG" id="KOG0757">
    <property type="taxonomic scope" value="Eukaryota"/>
</dbReference>
<dbReference type="GeneTree" id="ENSGT00940000158954"/>
<dbReference type="HOGENOM" id="CLU_015166_6_0_1"/>
<dbReference type="InParanoid" id="Q1LZB3"/>
<dbReference type="OMA" id="AFYNGMG"/>
<dbReference type="OrthoDB" id="269120at2759"/>
<dbReference type="TreeFam" id="TF314220"/>
<dbReference type="Proteomes" id="UP000009136">
    <property type="component" value="Chromosome 16"/>
</dbReference>
<dbReference type="Bgee" id="ENSBTAG00000003177">
    <property type="expression patterns" value="Expressed in retina and 104 other cell types or tissues"/>
</dbReference>
<dbReference type="GO" id="GO:0005743">
    <property type="term" value="C:mitochondrial inner membrane"/>
    <property type="evidence" value="ECO:0007669"/>
    <property type="project" value="UniProtKB-SubCell"/>
</dbReference>
<dbReference type="GO" id="GO:0031966">
    <property type="term" value="C:mitochondrial membrane"/>
    <property type="evidence" value="ECO:0000250"/>
    <property type="project" value="UniProtKB"/>
</dbReference>
<dbReference type="GO" id="GO:0005739">
    <property type="term" value="C:mitochondrion"/>
    <property type="evidence" value="ECO:0000318"/>
    <property type="project" value="GO_Central"/>
</dbReference>
<dbReference type="GO" id="GO:0015218">
    <property type="term" value="F:pyrimidine nucleotide transmembrane transporter activity"/>
    <property type="evidence" value="ECO:0000250"/>
    <property type="project" value="UniProtKB"/>
</dbReference>
<dbReference type="GO" id="GO:0032869">
    <property type="term" value="P:cellular response to insulin stimulus"/>
    <property type="evidence" value="ECO:0000250"/>
    <property type="project" value="UniProtKB"/>
</dbReference>
<dbReference type="GO" id="GO:1990314">
    <property type="term" value="P:cellular response to insulin-like growth factor stimulus"/>
    <property type="evidence" value="ECO:0000250"/>
    <property type="project" value="UniProtKB"/>
</dbReference>
<dbReference type="GO" id="GO:0031930">
    <property type="term" value="P:mitochondria-nucleus signaling pathway"/>
    <property type="evidence" value="ECO:0000250"/>
    <property type="project" value="UniProtKB"/>
</dbReference>
<dbReference type="GO" id="GO:0000002">
    <property type="term" value="P:mitochondrial genome maintenance"/>
    <property type="evidence" value="ECO:0000250"/>
    <property type="project" value="UniProtKB"/>
</dbReference>
<dbReference type="GO" id="GO:0034551">
    <property type="term" value="P:mitochondrial respiratory chain complex III assembly"/>
    <property type="evidence" value="ECO:0000250"/>
    <property type="project" value="UniProtKB"/>
</dbReference>
<dbReference type="GO" id="GO:0006390">
    <property type="term" value="P:mitochondrial transcription"/>
    <property type="evidence" value="ECO:0000250"/>
    <property type="project" value="UniProtKB"/>
</dbReference>
<dbReference type="GO" id="GO:0007005">
    <property type="term" value="P:mitochondrion organization"/>
    <property type="evidence" value="ECO:0000250"/>
    <property type="project" value="UniProtKB"/>
</dbReference>
<dbReference type="GO" id="GO:0030307">
    <property type="term" value="P:positive regulation of cell growth"/>
    <property type="evidence" value="ECO:0000250"/>
    <property type="project" value="UniProtKB"/>
</dbReference>
<dbReference type="GO" id="GO:0008284">
    <property type="term" value="P:positive regulation of cell population proliferation"/>
    <property type="evidence" value="ECO:0000250"/>
    <property type="project" value="UniProtKB"/>
</dbReference>
<dbReference type="GO" id="GO:1990519">
    <property type="term" value="P:pyrimidine nucleotide import into mitochondrion"/>
    <property type="evidence" value="ECO:0000250"/>
    <property type="project" value="UniProtKB"/>
</dbReference>
<dbReference type="GO" id="GO:0006864">
    <property type="term" value="P:pyrimidine nucleotide transport"/>
    <property type="evidence" value="ECO:0000250"/>
    <property type="project" value="UniProtKB"/>
</dbReference>
<dbReference type="GO" id="GO:0051881">
    <property type="term" value="P:regulation of mitochondrial membrane potential"/>
    <property type="evidence" value="ECO:0000250"/>
    <property type="project" value="UniProtKB"/>
</dbReference>
<dbReference type="GO" id="GO:0002082">
    <property type="term" value="P:regulation of oxidative phosphorylation"/>
    <property type="evidence" value="ECO:0000250"/>
    <property type="project" value="UniProtKB"/>
</dbReference>
<dbReference type="GO" id="GO:1903426">
    <property type="term" value="P:regulation of reactive oxygen species biosynthetic process"/>
    <property type="evidence" value="ECO:0000250"/>
    <property type="project" value="UniProtKB"/>
</dbReference>
<dbReference type="FunFam" id="1.50.40.10:FF:000260">
    <property type="entry name" value="Solute carrier family 25 member 33"/>
    <property type="match status" value="1"/>
</dbReference>
<dbReference type="FunFam" id="1.50.40.10:FF:000354">
    <property type="entry name" value="Solute carrier family 25 member 33"/>
    <property type="match status" value="1"/>
</dbReference>
<dbReference type="Gene3D" id="1.50.40.10">
    <property type="entry name" value="Mitochondrial carrier domain"/>
    <property type="match status" value="1"/>
</dbReference>
<dbReference type="InterPro" id="IPR018108">
    <property type="entry name" value="Mitochondrial_sb/sol_carrier"/>
</dbReference>
<dbReference type="InterPro" id="IPR023395">
    <property type="entry name" value="Mt_carrier_dom_sf"/>
</dbReference>
<dbReference type="InterPro" id="IPR049562">
    <property type="entry name" value="SLC25A33/36-like"/>
</dbReference>
<dbReference type="PANTHER" id="PTHR45829">
    <property type="entry name" value="MITOCHONDRIAL CARRIER PROTEIN RIM2"/>
    <property type="match status" value="1"/>
</dbReference>
<dbReference type="PANTHER" id="PTHR45829:SF5">
    <property type="entry name" value="SOLUTE CARRIER FAMILY 25 MEMBER 33"/>
    <property type="match status" value="1"/>
</dbReference>
<dbReference type="Pfam" id="PF00153">
    <property type="entry name" value="Mito_carr"/>
    <property type="match status" value="3"/>
</dbReference>
<dbReference type="SUPFAM" id="SSF103506">
    <property type="entry name" value="Mitochondrial carrier"/>
    <property type="match status" value="1"/>
</dbReference>
<dbReference type="PROSITE" id="PS50920">
    <property type="entry name" value="SOLCAR"/>
    <property type="match status" value="3"/>
</dbReference>
<keyword id="KW-0472">Membrane</keyword>
<keyword id="KW-0496">Mitochondrion</keyword>
<keyword id="KW-0999">Mitochondrion inner membrane</keyword>
<keyword id="KW-1185">Reference proteome</keyword>
<keyword id="KW-0677">Repeat</keyword>
<keyword id="KW-0812">Transmembrane</keyword>
<keyword id="KW-1133">Transmembrane helix</keyword>
<keyword id="KW-0813">Transport</keyword>